<dbReference type="EC" id="6.3.2.8" evidence="1"/>
<dbReference type="EMBL" id="CP000248">
    <property type="protein sequence ID" value="ABD25579.1"/>
    <property type="molecule type" value="Genomic_DNA"/>
</dbReference>
<dbReference type="RefSeq" id="WP_011444793.1">
    <property type="nucleotide sequence ID" value="NC_007794.1"/>
</dbReference>
<dbReference type="SMR" id="Q2G994"/>
<dbReference type="STRING" id="279238.Saro_1134"/>
<dbReference type="KEGG" id="nar:Saro_1134"/>
<dbReference type="eggNOG" id="COG0773">
    <property type="taxonomic scope" value="Bacteria"/>
</dbReference>
<dbReference type="HOGENOM" id="CLU_028104_2_2_5"/>
<dbReference type="UniPathway" id="UPA00219"/>
<dbReference type="Proteomes" id="UP000009134">
    <property type="component" value="Chromosome"/>
</dbReference>
<dbReference type="GO" id="GO:0005737">
    <property type="term" value="C:cytoplasm"/>
    <property type="evidence" value="ECO:0007669"/>
    <property type="project" value="UniProtKB-SubCell"/>
</dbReference>
<dbReference type="GO" id="GO:0005524">
    <property type="term" value="F:ATP binding"/>
    <property type="evidence" value="ECO:0007669"/>
    <property type="project" value="UniProtKB-UniRule"/>
</dbReference>
<dbReference type="GO" id="GO:0008763">
    <property type="term" value="F:UDP-N-acetylmuramate-L-alanine ligase activity"/>
    <property type="evidence" value="ECO:0007669"/>
    <property type="project" value="UniProtKB-UniRule"/>
</dbReference>
<dbReference type="GO" id="GO:0051301">
    <property type="term" value="P:cell division"/>
    <property type="evidence" value="ECO:0007669"/>
    <property type="project" value="UniProtKB-KW"/>
</dbReference>
<dbReference type="GO" id="GO:0071555">
    <property type="term" value="P:cell wall organization"/>
    <property type="evidence" value="ECO:0007669"/>
    <property type="project" value="UniProtKB-KW"/>
</dbReference>
<dbReference type="GO" id="GO:0009252">
    <property type="term" value="P:peptidoglycan biosynthetic process"/>
    <property type="evidence" value="ECO:0007669"/>
    <property type="project" value="UniProtKB-UniRule"/>
</dbReference>
<dbReference type="GO" id="GO:0008360">
    <property type="term" value="P:regulation of cell shape"/>
    <property type="evidence" value="ECO:0007669"/>
    <property type="project" value="UniProtKB-KW"/>
</dbReference>
<dbReference type="Gene3D" id="3.90.190.20">
    <property type="entry name" value="Mur ligase, C-terminal domain"/>
    <property type="match status" value="1"/>
</dbReference>
<dbReference type="Gene3D" id="3.40.1190.10">
    <property type="entry name" value="Mur-like, catalytic domain"/>
    <property type="match status" value="1"/>
</dbReference>
<dbReference type="Gene3D" id="3.40.50.720">
    <property type="entry name" value="NAD(P)-binding Rossmann-like Domain"/>
    <property type="match status" value="1"/>
</dbReference>
<dbReference type="HAMAP" id="MF_00046">
    <property type="entry name" value="MurC"/>
    <property type="match status" value="1"/>
</dbReference>
<dbReference type="InterPro" id="IPR036565">
    <property type="entry name" value="Mur-like_cat_sf"/>
</dbReference>
<dbReference type="InterPro" id="IPR004101">
    <property type="entry name" value="Mur_ligase_C"/>
</dbReference>
<dbReference type="InterPro" id="IPR036615">
    <property type="entry name" value="Mur_ligase_C_dom_sf"/>
</dbReference>
<dbReference type="InterPro" id="IPR013221">
    <property type="entry name" value="Mur_ligase_cen"/>
</dbReference>
<dbReference type="InterPro" id="IPR000713">
    <property type="entry name" value="Mur_ligase_N"/>
</dbReference>
<dbReference type="InterPro" id="IPR050061">
    <property type="entry name" value="MurCDEF_pg_biosynth"/>
</dbReference>
<dbReference type="InterPro" id="IPR005758">
    <property type="entry name" value="UDP-N-AcMur_Ala_ligase_MurC"/>
</dbReference>
<dbReference type="NCBIfam" id="TIGR01082">
    <property type="entry name" value="murC"/>
    <property type="match status" value="1"/>
</dbReference>
<dbReference type="PANTHER" id="PTHR43445:SF3">
    <property type="entry name" value="UDP-N-ACETYLMURAMATE--L-ALANINE LIGASE"/>
    <property type="match status" value="1"/>
</dbReference>
<dbReference type="PANTHER" id="PTHR43445">
    <property type="entry name" value="UDP-N-ACETYLMURAMATE--L-ALANINE LIGASE-RELATED"/>
    <property type="match status" value="1"/>
</dbReference>
<dbReference type="Pfam" id="PF01225">
    <property type="entry name" value="Mur_ligase"/>
    <property type="match status" value="1"/>
</dbReference>
<dbReference type="Pfam" id="PF02875">
    <property type="entry name" value="Mur_ligase_C"/>
    <property type="match status" value="1"/>
</dbReference>
<dbReference type="Pfam" id="PF08245">
    <property type="entry name" value="Mur_ligase_M"/>
    <property type="match status" value="1"/>
</dbReference>
<dbReference type="SUPFAM" id="SSF51984">
    <property type="entry name" value="MurCD N-terminal domain"/>
    <property type="match status" value="1"/>
</dbReference>
<dbReference type="SUPFAM" id="SSF53623">
    <property type="entry name" value="MurD-like peptide ligases, catalytic domain"/>
    <property type="match status" value="1"/>
</dbReference>
<dbReference type="SUPFAM" id="SSF53244">
    <property type="entry name" value="MurD-like peptide ligases, peptide-binding domain"/>
    <property type="match status" value="1"/>
</dbReference>
<organism>
    <name type="scientific">Novosphingobium aromaticivorans (strain ATCC 700278 / DSM 12444 / CCUG 56034 / CIP 105152 / NBRC 16084 / F199)</name>
    <dbReference type="NCBI Taxonomy" id="279238"/>
    <lineage>
        <taxon>Bacteria</taxon>
        <taxon>Pseudomonadati</taxon>
        <taxon>Pseudomonadota</taxon>
        <taxon>Alphaproteobacteria</taxon>
        <taxon>Sphingomonadales</taxon>
        <taxon>Sphingomonadaceae</taxon>
        <taxon>Novosphingobium</taxon>
    </lineage>
</organism>
<protein>
    <recommendedName>
        <fullName evidence="1">UDP-N-acetylmuramate--L-alanine ligase</fullName>
        <ecNumber evidence="1">6.3.2.8</ecNumber>
    </recommendedName>
    <alternativeName>
        <fullName evidence="1">UDP-N-acetylmuramoyl-L-alanine synthetase</fullName>
    </alternativeName>
</protein>
<reference key="1">
    <citation type="submission" date="2006-01" db="EMBL/GenBank/DDBJ databases">
        <title>Complete sequence of Novosphingobium aromaticivorans DSM 12444.</title>
        <authorList>
            <consortium name="US DOE Joint Genome Institute"/>
            <person name="Copeland A."/>
            <person name="Lucas S."/>
            <person name="Lapidus A."/>
            <person name="Barry K."/>
            <person name="Detter J.C."/>
            <person name="Glavina T."/>
            <person name="Hammon N."/>
            <person name="Israni S."/>
            <person name="Pitluck S."/>
            <person name="Chain P."/>
            <person name="Malfatti S."/>
            <person name="Shin M."/>
            <person name="Vergez L."/>
            <person name="Schmutz J."/>
            <person name="Larimer F."/>
            <person name="Land M."/>
            <person name="Kyrpides N."/>
            <person name="Ivanova N."/>
            <person name="Fredrickson J."/>
            <person name="Balkwill D."/>
            <person name="Romine M.F."/>
            <person name="Richardson P."/>
        </authorList>
    </citation>
    <scope>NUCLEOTIDE SEQUENCE [LARGE SCALE GENOMIC DNA]</scope>
    <source>
        <strain>ATCC 700278 / DSM 12444 / CCUG 56034 / CIP 105152 / NBRC 16084 / F199</strain>
    </source>
</reference>
<keyword id="KW-0067">ATP-binding</keyword>
<keyword id="KW-0131">Cell cycle</keyword>
<keyword id="KW-0132">Cell division</keyword>
<keyword id="KW-0133">Cell shape</keyword>
<keyword id="KW-0961">Cell wall biogenesis/degradation</keyword>
<keyword id="KW-0963">Cytoplasm</keyword>
<keyword id="KW-0436">Ligase</keyword>
<keyword id="KW-0547">Nucleotide-binding</keyword>
<keyword id="KW-0573">Peptidoglycan synthesis</keyword>
<keyword id="KW-1185">Reference proteome</keyword>
<feature type="chain" id="PRO_0000242570" description="UDP-N-acetylmuramate--L-alanine ligase">
    <location>
        <begin position="1"/>
        <end position="474"/>
    </location>
</feature>
<feature type="binding site" evidence="1">
    <location>
        <begin position="115"/>
        <end position="121"/>
    </location>
    <ligand>
        <name>ATP</name>
        <dbReference type="ChEBI" id="CHEBI:30616"/>
    </ligand>
</feature>
<comment type="function">
    <text evidence="1">Cell wall formation.</text>
</comment>
<comment type="catalytic activity">
    <reaction evidence="1">
        <text>UDP-N-acetyl-alpha-D-muramate + L-alanine + ATP = UDP-N-acetyl-alpha-D-muramoyl-L-alanine + ADP + phosphate + H(+)</text>
        <dbReference type="Rhea" id="RHEA:23372"/>
        <dbReference type="ChEBI" id="CHEBI:15378"/>
        <dbReference type="ChEBI" id="CHEBI:30616"/>
        <dbReference type="ChEBI" id="CHEBI:43474"/>
        <dbReference type="ChEBI" id="CHEBI:57972"/>
        <dbReference type="ChEBI" id="CHEBI:70757"/>
        <dbReference type="ChEBI" id="CHEBI:83898"/>
        <dbReference type="ChEBI" id="CHEBI:456216"/>
        <dbReference type="EC" id="6.3.2.8"/>
    </reaction>
</comment>
<comment type="pathway">
    <text evidence="1">Cell wall biogenesis; peptidoglycan biosynthesis.</text>
</comment>
<comment type="subcellular location">
    <subcellularLocation>
        <location evidence="1">Cytoplasm</location>
    </subcellularLocation>
</comment>
<comment type="similarity">
    <text evidence="1">Belongs to the MurCDEF family.</text>
</comment>
<sequence length="474" mass="50210">MKGVGTEIGTIHFVGIGGIGMSGIAEVMHNMGYSVQGSDMAESYVVEGLRSRGIKVMIGQKAENVAGVAVVVTSTAVKRDNPEVVAALENRIPVVRRAEMLAELMRLKSTVAVAGTHGKTTTTSMVACLLDAGGIDPTVINGGIINSYGSNARLGDSDWMVVEADESDGSFLRLDGTLAVVTNIDPEHLDHYGSFERVKSAFVEFIENVPFYGAAMLCIDHPEVQAIIPKVRDRRVVTYGFSAQADVRGEGVTPIPGGNRFTAVLRQRDGSFRRIEGIELPMPGRHNVQNALAAVAVAVEMGVSDELIRGGFAKFGGVKRRFTKVGEVDIGSGAVTIIDDYGHHPVEIRAVLAAAREGVQGRVIAVVQPHRFTRLRDHMDEFQGAFNDADVVYAAPVYPAGEQPIEGVDSAAMVEGIKARGHRSAHLTTGADELAKELAATVQAGDMVVCLGAGDITKWAAGLADAIARERAGA</sequence>
<accession>Q2G994</accession>
<proteinExistence type="inferred from homology"/>
<name>MURC_NOVAD</name>
<evidence type="ECO:0000255" key="1">
    <source>
        <dbReference type="HAMAP-Rule" id="MF_00046"/>
    </source>
</evidence>
<gene>
    <name evidence="1" type="primary">murC</name>
    <name type="ordered locus">Saro_1134</name>
</gene>